<proteinExistence type="inferred from homology"/>
<gene>
    <name evidence="1" type="primary">ruvA</name>
    <name type="ordered locus">Mlg_2494</name>
</gene>
<name>RUVA_ALKEH</name>
<sequence length="208" mass="21915">MIGRLHGTVAERHPPALLLDVGGVGYELEAPMSTFYALPAGDQAVTLWTHLAVRDDGQALYGFASRAERDLFRVLIRISGVGPKLALALLSGMNAEGLQRCIEREDVATLTRLPGVGRKTAQRLIVELRDRLDGLLPAASGGVPARTGSGEQLDAPAGPQGSREDAVSALVALGYKPAEAGRLVNAVPGANDLPSEELIRRALQAAVR</sequence>
<protein>
    <recommendedName>
        <fullName evidence="1">Holliday junction branch migration complex subunit RuvA</fullName>
    </recommendedName>
</protein>
<dbReference type="EMBL" id="CP000453">
    <property type="protein sequence ID" value="ABI57834.1"/>
    <property type="molecule type" value="Genomic_DNA"/>
</dbReference>
<dbReference type="RefSeq" id="WP_011630227.1">
    <property type="nucleotide sequence ID" value="NC_008340.1"/>
</dbReference>
<dbReference type="SMR" id="Q0A5Q3"/>
<dbReference type="KEGG" id="aeh:Mlg_2494"/>
<dbReference type="eggNOG" id="COG0632">
    <property type="taxonomic scope" value="Bacteria"/>
</dbReference>
<dbReference type="HOGENOM" id="CLU_087936_0_0_6"/>
<dbReference type="OrthoDB" id="5293449at2"/>
<dbReference type="Proteomes" id="UP000001962">
    <property type="component" value="Chromosome"/>
</dbReference>
<dbReference type="GO" id="GO:0005737">
    <property type="term" value="C:cytoplasm"/>
    <property type="evidence" value="ECO:0007669"/>
    <property type="project" value="UniProtKB-SubCell"/>
</dbReference>
<dbReference type="GO" id="GO:0009379">
    <property type="term" value="C:Holliday junction helicase complex"/>
    <property type="evidence" value="ECO:0007669"/>
    <property type="project" value="InterPro"/>
</dbReference>
<dbReference type="GO" id="GO:0048476">
    <property type="term" value="C:Holliday junction resolvase complex"/>
    <property type="evidence" value="ECO:0007669"/>
    <property type="project" value="UniProtKB-UniRule"/>
</dbReference>
<dbReference type="GO" id="GO:0005524">
    <property type="term" value="F:ATP binding"/>
    <property type="evidence" value="ECO:0007669"/>
    <property type="project" value="InterPro"/>
</dbReference>
<dbReference type="GO" id="GO:0000400">
    <property type="term" value="F:four-way junction DNA binding"/>
    <property type="evidence" value="ECO:0007669"/>
    <property type="project" value="UniProtKB-UniRule"/>
</dbReference>
<dbReference type="GO" id="GO:0009378">
    <property type="term" value="F:four-way junction helicase activity"/>
    <property type="evidence" value="ECO:0007669"/>
    <property type="project" value="InterPro"/>
</dbReference>
<dbReference type="GO" id="GO:0006310">
    <property type="term" value="P:DNA recombination"/>
    <property type="evidence" value="ECO:0007669"/>
    <property type="project" value="UniProtKB-UniRule"/>
</dbReference>
<dbReference type="GO" id="GO:0006281">
    <property type="term" value="P:DNA repair"/>
    <property type="evidence" value="ECO:0007669"/>
    <property type="project" value="UniProtKB-UniRule"/>
</dbReference>
<dbReference type="CDD" id="cd14332">
    <property type="entry name" value="UBA_RuvA_C"/>
    <property type="match status" value="1"/>
</dbReference>
<dbReference type="Gene3D" id="1.10.150.20">
    <property type="entry name" value="5' to 3' exonuclease, C-terminal subdomain"/>
    <property type="match status" value="1"/>
</dbReference>
<dbReference type="Gene3D" id="1.10.8.10">
    <property type="entry name" value="DNA helicase RuvA subunit, C-terminal domain"/>
    <property type="match status" value="1"/>
</dbReference>
<dbReference type="Gene3D" id="2.40.50.140">
    <property type="entry name" value="Nucleic acid-binding proteins"/>
    <property type="match status" value="1"/>
</dbReference>
<dbReference type="HAMAP" id="MF_00031">
    <property type="entry name" value="DNA_HJ_migration_RuvA"/>
    <property type="match status" value="1"/>
</dbReference>
<dbReference type="InterPro" id="IPR013849">
    <property type="entry name" value="DNA_helicase_Holl-junc_RuvA_I"/>
</dbReference>
<dbReference type="InterPro" id="IPR003583">
    <property type="entry name" value="Hlx-hairpin-Hlx_DNA-bd_motif"/>
</dbReference>
<dbReference type="InterPro" id="IPR012340">
    <property type="entry name" value="NA-bd_OB-fold"/>
</dbReference>
<dbReference type="InterPro" id="IPR000085">
    <property type="entry name" value="RuvA"/>
</dbReference>
<dbReference type="InterPro" id="IPR010994">
    <property type="entry name" value="RuvA_2-like"/>
</dbReference>
<dbReference type="InterPro" id="IPR011114">
    <property type="entry name" value="RuvA_C"/>
</dbReference>
<dbReference type="InterPro" id="IPR036267">
    <property type="entry name" value="RuvA_C_sf"/>
</dbReference>
<dbReference type="NCBIfam" id="TIGR00084">
    <property type="entry name" value="ruvA"/>
    <property type="match status" value="1"/>
</dbReference>
<dbReference type="Pfam" id="PF14520">
    <property type="entry name" value="HHH_5"/>
    <property type="match status" value="1"/>
</dbReference>
<dbReference type="Pfam" id="PF07499">
    <property type="entry name" value="RuvA_C"/>
    <property type="match status" value="1"/>
</dbReference>
<dbReference type="Pfam" id="PF01330">
    <property type="entry name" value="RuvA_N"/>
    <property type="match status" value="1"/>
</dbReference>
<dbReference type="SMART" id="SM00278">
    <property type="entry name" value="HhH1"/>
    <property type="match status" value="2"/>
</dbReference>
<dbReference type="SUPFAM" id="SSF46929">
    <property type="entry name" value="DNA helicase RuvA subunit, C-terminal domain"/>
    <property type="match status" value="1"/>
</dbReference>
<dbReference type="SUPFAM" id="SSF50249">
    <property type="entry name" value="Nucleic acid-binding proteins"/>
    <property type="match status" value="1"/>
</dbReference>
<dbReference type="SUPFAM" id="SSF47781">
    <property type="entry name" value="RuvA domain 2-like"/>
    <property type="match status" value="1"/>
</dbReference>
<reference key="1">
    <citation type="submission" date="2006-08" db="EMBL/GenBank/DDBJ databases">
        <title>Complete sequence of Alkalilimnicola ehrilichei MLHE-1.</title>
        <authorList>
            <person name="Copeland A."/>
            <person name="Lucas S."/>
            <person name="Lapidus A."/>
            <person name="Barry K."/>
            <person name="Detter J.C."/>
            <person name="Glavina del Rio T."/>
            <person name="Hammon N."/>
            <person name="Israni S."/>
            <person name="Dalin E."/>
            <person name="Tice H."/>
            <person name="Pitluck S."/>
            <person name="Sims D."/>
            <person name="Brettin T."/>
            <person name="Bruce D."/>
            <person name="Han C."/>
            <person name="Tapia R."/>
            <person name="Gilna P."/>
            <person name="Schmutz J."/>
            <person name="Larimer F."/>
            <person name="Land M."/>
            <person name="Hauser L."/>
            <person name="Kyrpides N."/>
            <person name="Mikhailova N."/>
            <person name="Oremland R.S."/>
            <person name="Hoeft S.E."/>
            <person name="Switzer-Blum J."/>
            <person name="Kulp T."/>
            <person name="King G."/>
            <person name="Tabita R."/>
            <person name="Witte B."/>
            <person name="Santini J.M."/>
            <person name="Basu P."/>
            <person name="Hollibaugh J.T."/>
            <person name="Xie G."/>
            <person name="Stolz J.F."/>
            <person name="Richardson P."/>
        </authorList>
    </citation>
    <scope>NUCLEOTIDE SEQUENCE [LARGE SCALE GENOMIC DNA]</scope>
    <source>
        <strain>ATCC BAA-1101 / DSM 17681 / MLHE-1</strain>
    </source>
</reference>
<accession>Q0A5Q3</accession>
<feature type="chain" id="PRO_1000002389" description="Holliday junction branch migration complex subunit RuvA">
    <location>
        <begin position="1"/>
        <end position="208"/>
    </location>
</feature>
<feature type="region of interest" description="Domain I" evidence="1">
    <location>
        <begin position="1"/>
        <end position="64"/>
    </location>
</feature>
<feature type="region of interest" description="Domain II" evidence="1">
    <location>
        <begin position="65"/>
        <end position="143"/>
    </location>
</feature>
<feature type="region of interest" description="Disordered" evidence="2">
    <location>
        <begin position="139"/>
        <end position="162"/>
    </location>
</feature>
<feature type="region of interest" description="Flexible linker" evidence="1">
    <location>
        <begin position="144"/>
        <end position="157"/>
    </location>
</feature>
<feature type="region of interest" description="Domain III" evidence="1">
    <location>
        <begin position="158"/>
        <end position="208"/>
    </location>
</feature>
<keyword id="KW-0963">Cytoplasm</keyword>
<keyword id="KW-0227">DNA damage</keyword>
<keyword id="KW-0233">DNA recombination</keyword>
<keyword id="KW-0234">DNA repair</keyword>
<keyword id="KW-0238">DNA-binding</keyword>
<keyword id="KW-1185">Reference proteome</keyword>
<evidence type="ECO:0000255" key="1">
    <source>
        <dbReference type="HAMAP-Rule" id="MF_00031"/>
    </source>
</evidence>
<evidence type="ECO:0000256" key="2">
    <source>
        <dbReference type="SAM" id="MobiDB-lite"/>
    </source>
</evidence>
<comment type="function">
    <text evidence="1">The RuvA-RuvB-RuvC complex processes Holliday junction (HJ) DNA during genetic recombination and DNA repair, while the RuvA-RuvB complex plays an important role in the rescue of blocked DNA replication forks via replication fork reversal (RFR). RuvA specifically binds to HJ cruciform DNA, conferring on it an open structure. The RuvB hexamer acts as an ATP-dependent pump, pulling dsDNA into and through the RuvAB complex. HJ branch migration allows RuvC to scan DNA until it finds its consensus sequence, where it cleaves and resolves the cruciform DNA.</text>
</comment>
<comment type="subunit">
    <text evidence="1">Homotetramer. Forms an RuvA(8)-RuvB(12)-Holliday junction (HJ) complex. HJ DNA is sandwiched between 2 RuvA tetramers; dsDNA enters through RuvA and exits via RuvB. An RuvB hexamer assembles on each DNA strand where it exits the tetramer. Each RuvB hexamer is contacted by two RuvA subunits (via domain III) on 2 adjacent RuvB subunits; this complex drives branch migration. In the full resolvosome a probable DNA-RuvA(4)-RuvB(12)-RuvC(2) complex forms which resolves the HJ.</text>
</comment>
<comment type="subcellular location">
    <subcellularLocation>
        <location evidence="1">Cytoplasm</location>
    </subcellularLocation>
</comment>
<comment type="domain">
    <text evidence="1">Has three domains with a flexible linker between the domains II and III and assumes an 'L' shape. Domain III is highly mobile and contacts RuvB.</text>
</comment>
<comment type="similarity">
    <text evidence="1">Belongs to the RuvA family.</text>
</comment>
<organism>
    <name type="scientific">Alkalilimnicola ehrlichii (strain ATCC BAA-1101 / DSM 17681 / MLHE-1)</name>
    <dbReference type="NCBI Taxonomy" id="187272"/>
    <lineage>
        <taxon>Bacteria</taxon>
        <taxon>Pseudomonadati</taxon>
        <taxon>Pseudomonadota</taxon>
        <taxon>Gammaproteobacteria</taxon>
        <taxon>Chromatiales</taxon>
        <taxon>Ectothiorhodospiraceae</taxon>
        <taxon>Alkalilimnicola</taxon>
    </lineage>
</organism>